<comment type="function">
    <text evidence="1 3">Positively regulates the activity of the minus-end directed microtubule motor protein dynein. May enhance dynein-mediated microtubule sliding by targeting dynein to the microtubule plus end. Required for nuclear migration during vegetative growth as well as development. Required for localization of dynein to the mitotic spindle poles. Recruits additional proteins to the dynein complex at SPBs (By similarity). Required for retrograde early endosome (EE) transport from the hyphal tip.</text>
</comment>
<comment type="subunit">
    <text evidence="2">Self-associates. Interacts with NDL1 and dynein.</text>
</comment>
<comment type="subcellular location">
    <subcellularLocation>
        <location evidence="2 3">Cytoplasm</location>
        <location evidence="2 3">Cytoskeleton</location>
    </subcellularLocation>
    <subcellularLocation>
        <location evidence="2 3">Cytoplasm</location>
        <location evidence="2 3">Cytoskeleton</location>
        <location evidence="2 3">Spindle pole</location>
    </subcellularLocation>
    <text>Localizes to the plus ends of microtubules at the hyphal tip and the mitotic spindle poles.</text>
</comment>
<comment type="domain">
    <text evidence="2">Dimerization mediated by the LisH domain may be required to activate dynein.</text>
</comment>
<comment type="similarity">
    <text evidence="2">Belongs to the WD repeat LIS1/nudF family.</text>
</comment>
<evidence type="ECO:0000250" key="1"/>
<evidence type="ECO:0000255" key="2">
    <source>
        <dbReference type="HAMAP-Rule" id="MF_03141"/>
    </source>
</evidence>
<evidence type="ECO:0000269" key="3">
    <source>
    </source>
</evidence>
<protein>
    <recommendedName>
        <fullName evidence="2">Nuclear distribution protein PAC1</fullName>
    </recommendedName>
    <alternativeName>
        <fullName evidence="2">Lissencephaly-1 homolog</fullName>
        <shortName evidence="2">LIS-1</shortName>
    </alternativeName>
    <alternativeName>
        <fullName evidence="2">nudF homolog</fullName>
    </alternativeName>
</protein>
<dbReference type="EMBL" id="CM003147">
    <property type="protein sequence ID" value="KIS68592.1"/>
    <property type="molecule type" value="Genomic_DNA"/>
</dbReference>
<dbReference type="RefSeq" id="XP_011389620.1">
    <property type="nucleotide sequence ID" value="XM_011391318.1"/>
</dbReference>
<dbReference type="SMR" id="Q4P9P9"/>
<dbReference type="STRING" id="237631.Q4P9P9"/>
<dbReference type="EnsemblFungi" id="KIS68592">
    <property type="protein sequence ID" value="KIS68592"/>
    <property type="gene ID" value="UMAG_03164"/>
</dbReference>
<dbReference type="KEGG" id="uma:UMAG_03164"/>
<dbReference type="VEuPathDB" id="FungiDB:UMAG_03164"/>
<dbReference type="eggNOG" id="KOG0295">
    <property type="taxonomic scope" value="Eukaryota"/>
</dbReference>
<dbReference type="HOGENOM" id="CLU_000288_57_15_1"/>
<dbReference type="InParanoid" id="Q4P9P9"/>
<dbReference type="OMA" id="WHVATKE"/>
<dbReference type="OrthoDB" id="10264588at2759"/>
<dbReference type="Proteomes" id="UP000000561">
    <property type="component" value="Chromosome 8"/>
</dbReference>
<dbReference type="GO" id="GO:0005881">
    <property type="term" value="C:cytoplasmic microtubule"/>
    <property type="evidence" value="ECO:0000318"/>
    <property type="project" value="GO_Central"/>
</dbReference>
<dbReference type="GO" id="GO:0000776">
    <property type="term" value="C:kinetochore"/>
    <property type="evidence" value="ECO:0000318"/>
    <property type="project" value="GO_Central"/>
</dbReference>
<dbReference type="GO" id="GO:0005875">
    <property type="term" value="C:microtubule associated complex"/>
    <property type="evidence" value="ECO:0000318"/>
    <property type="project" value="GO_Central"/>
</dbReference>
<dbReference type="GO" id="GO:0005635">
    <property type="term" value="C:nuclear envelope"/>
    <property type="evidence" value="ECO:0000318"/>
    <property type="project" value="GO_Central"/>
</dbReference>
<dbReference type="GO" id="GO:0000922">
    <property type="term" value="C:spindle pole"/>
    <property type="evidence" value="ECO:0007669"/>
    <property type="project" value="UniProtKB-SubCell"/>
</dbReference>
<dbReference type="GO" id="GO:0070840">
    <property type="term" value="F:dynein complex binding"/>
    <property type="evidence" value="ECO:0000318"/>
    <property type="project" value="GO_Central"/>
</dbReference>
<dbReference type="GO" id="GO:0051010">
    <property type="term" value="F:microtubule plus-end binding"/>
    <property type="evidence" value="ECO:0000318"/>
    <property type="project" value="GO_Central"/>
</dbReference>
<dbReference type="GO" id="GO:0051301">
    <property type="term" value="P:cell division"/>
    <property type="evidence" value="ECO:0007669"/>
    <property type="project" value="UniProtKB-KW"/>
</dbReference>
<dbReference type="GO" id="GO:0000132">
    <property type="term" value="P:establishment of mitotic spindle orientation"/>
    <property type="evidence" value="ECO:0000318"/>
    <property type="project" value="GO_Central"/>
</dbReference>
<dbReference type="GO" id="GO:0031023">
    <property type="term" value="P:microtubule organizing center organization"/>
    <property type="evidence" value="ECO:0000318"/>
    <property type="project" value="GO_Central"/>
</dbReference>
<dbReference type="GO" id="GO:0051012">
    <property type="term" value="P:microtubule sliding"/>
    <property type="evidence" value="ECO:0007669"/>
    <property type="project" value="UniProtKB-UniRule"/>
</dbReference>
<dbReference type="GO" id="GO:0007097">
    <property type="term" value="P:nuclear migration"/>
    <property type="evidence" value="ECO:0000318"/>
    <property type="project" value="GO_Central"/>
</dbReference>
<dbReference type="GO" id="GO:0047496">
    <property type="term" value="P:vesicle transport along microtubule"/>
    <property type="evidence" value="ECO:0000318"/>
    <property type="project" value="GO_Central"/>
</dbReference>
<dbReference type="CDD" id="cd00200">
    <property type="entry name" value="WD40"/>
    <property type="match status" value="1"/>
</dbReference>
<dbReference type="FunFam" id="2.130.10.10:FF:000342">
    <property type="entry name" value="Nuclear distribution protein PAC1"/>
    <property type="match status" value="1"/>
</dbReference>
<dbReference type="FunFam" id="1.20.960.30:FF:000002">
    <property type="entry name" value="Platelet-activating factor acetylhydrolase ib"/>
    <property type="match status" value="1"/>
</dbReference>
<dbReference type="Gene3D" id="1.20.960.30">
    <property type="match status" value="1"/>
</dbReference>
<dbReference type="Gene3D" id="2.130.10.10">
    <property type="entry name" value="YVTN repeat-like/Quinoprotein amine dehydrogenase"/>
    <property type="match status" value="1"/>
</dbReference>
<dbReference type="HAMAP" id="MF_03141">
    <property type="entry name" value="lis1"/>
    <property type="match status" value="1"/>
</dbReference>
<dbReference type="InterPro" id="IPR050844">
    <property type="entry name" value="Coatomer_complex_subunit"/>
</dbReference>
<dbReference type="InterPro" id="IPR017252">
    <property type="entry name" value="Dynein_regulator_LIS1"/>
</dbReference>
<dbReference type="InterPro" id="IPR020472">
    <property type="entry name" value="G-protein_beta_WD-40_rep"/>
</dbReference>
<dbReference type="InterPro" id="IPR037190">
    <property type="entry name" value="LIS1_N"/>
</dbReference>
<dbReference type="InterPro" id="IPR006594">
    <property type="entry name" value="LisH"/>
</dbReference>
<dbReference type="InterPro" id="IPR056795">
    <property type="entry name" value="PAC1-like_LisH-like_dom"/>
</dbReference>
<dbReference type="InterPro" id="IPR015943">
    <property type="entry name" value="WD40/YVTN_repeat-like_dom_sf"/>
</dbReference>
<dbReference type="InterPro" id="IPR019775">
    <property type="entry name" value="WD40_repeat_CS"/>
</dbReference>
<dbReference type="InterPro" id="IPR036322">
    <property type="entry name" value="WD40_repeat_dom_sf"/>
</dbReference>
<dbReference type="InterPro" id="IPR001680">
    <property type="entry name" value="WD40_rpt"/>
</dbReference>
<dbReference type="PANTHER" id="PTHR19876">
    <property type="entry name" value="COATOMER"/>
    <property type="match status" value="1"/>
</dbReference>
<dbReference type="Pfam" id="PF24951">
    <property type="entry name" value="LisH_PAC1"/>
    <property type="match status" value="1"/>
</dbReference>
<dbReference type="Pfam" id="PF00400">
    <property type="entry name" value="WD40"/>
    <property type="match status" value="6"/>
</dbReference>
<dbReference type="PIRSF" id="PIRSF037647">
    <property type="entry name" value="Dynein_regulator_Lis1"/>
    <property type="match status" value="1"/>
</dbReference>
<dbReference type="PRINTS" id="PR00320">
    <property type="entry name" value="GPROTEINBRPT"/>
</dbReference>
<dbReference type="SMART" id="SM00667">
    <property type="entry name" value="LisH"/>
    <property type="match status" value="1"/>
</dbReference>
<dbReference type="SMART" id="SM00320">
    <property type="entry name" value="WD40"/>
    <property type="match status" value="7"/>
</dbReference>
<dbReference type="SUPFAM" id="SSF109925">
    <property type="entry name" value="Lissencephaly-1 protein (Lis-1, PAF-AH alpha) N-terminal domain"/>
    <property type="match status" value="1"/>
</dbReference>
<dbReference type="SUPFAM" id="SSF50978">
    <property type="entry name" value="WD40 repeat-like"/>
    <property type="match status" value="1"/>
</dbReference>
<dbReference type="PROSITE" id="PS50896">
    <property type="entry name" value="LISH"/>
    <property type="match status" value="1"/>
</dbReference>
<dbReference type="PROSITE" id="PS00678">
    <property type="entry name" value="WD_REPEATS_1"/>
    <property type="match status" value="5"/>
</dbReference>
<dbReference type="PROSITE" id="PS50082">
    <property type="entry name" value="WD_REPEATS_2"/>
    <property type="match status" value="6"/>
</dbReference>
<dbReference type="PROSITE" id="PS50294">
    <property type="entry name" value="WD_REPEATS_REGION"/>
    <property type="match status" value="1"/>
</dbReference>
<organism>
    <name type="scientific">Mycosarcoma maydis</name>
    <name type="common">Corn smut fungus</name>
    <name type="synonym">Ustilago maydis</name>
    <dbReference type="NCBI Taxonomy" id="5270"/>
    <lineage>
        <taxon>Eukaryota</taxon>
        <taxon>Fungi</taxon>
        <taxon>Dikarya</taxon>
        <taxon>Basidiomycota</taxon>
        <taxon>Ustilaginomycotina</taxon>
        <taxon>Ustilaginomycetes</taxon>
        <taxon>Ustilaginales</taxon>
        <taxon>Ustilaginaceae</taxon>
        <taxon>Mycosarcoma</taxon>
    </lineage>
</organism>
<reference key="1">
    <citation type="journal article" date="2006" name="Nature">
        <title>Insights from the genome of the biotrophic fungal plant pathogen Ustilago maydis.</title>
        <authorList>
            <person name="Kaemper J."/>
            <person name="Kahmann R."/>
            <person name="Boelker M."/>
            <person name="Ma L.-J."/>
            <person name="Brefort T."/>
            <person name="Saville B.J."/>
            <person name="Banuett F."/>
            <person name="Kronstad J.W."/>
            <person name="Gold S.E."/>
            <person name="Mueller O."/>
            <person name="Perlin M.H."/>
            <person name="Woesten H.A.B."/>
            <person name="de Vries R."/>
            <person name="Ruiz-Herrera J."/>
            <person name="Reynaga-Pena C.G."/>
            <person name="Snetselaar K."/>
            <person name="McCann M."/>
            <person name="Perez-Martin J."/>
            <person name="Feldbruegge M."/>
            <person name="Basse C.W."/>
            <person name="Steinberg G."/>
            <person name="Ibeas J.I."/>
            <person name="Holloman W."/>
            <person name="Guzman P."/>
            <person name="Farman M.L."/>
            <person name="Stajich J.E."/>
            <person name="Sentandreu R."/>
            <person name="Gonzalez-Prieto J.M."/>
            <person name="Kennell J.C."/>
            <person name="Molina L."/>
            <person name="Schirawski J."/>
            <person name="Mendoza-Mendoza A."/>
            <person name="Greilinger D."/>
            <person name="Muench K."/>
            <person name="Roessel N."/>
            <person name="Scherer M."/>
            <person name="Vranes M."/>
            <person name="Ladendorf O."/>
            <person name="Vincon V."/>
            <person name="Fuchs U."/>
            <person name="Sandrock B."/>
            <person name="Meng S."/>
            <person name="Ho E.C.H."/>
            <person name="Cahill M.J."/>
            <person name="Boyce K.J."/>
            <person name="Klose J."/>
            <person name="Klosterman S.J."/>
            <person name="Deelstra H.J."/>
            <person name="Ortiz-Castellanos L."/>
            <person name="Li W."/>
            <person name="Sanchez-Alonso P."/>
            <person name="Schreier P.H."/>
            <person name="Haeuser-Hahn I."/>
            <person name="Vaupel M."/>
            <person name="Koopmann E."/>
            <person name="Friedrich G."/>
            <person name="Voss H."/>
            <person name="Schlueter T."/>
            <person name="Margolis J."/>
            <person name="Platt D."/>
            <person name="Swimmer C."/>
            <person name="Gnirke A."/>
            <person name="Chen F."/>
            <person name="Vysotskaia V."/>
            <person name="Mannhaupt G."/>
            <person name="Gueldener U."/>
            <person name="Muensterkoetter M."/>
            <person name="Haase D."/>
            <person name="Oesterheld M."/>
            <person name="Mewes H.-W."/>
            <person name="Mauceli E.W."/>
            <person name="DeCaprio D."/>
            <person name="Wade C.M."/>
            <person name="Butler J."/>
            <person name="Young S.K."/>
            <person name="Jaffe D.B."/>
            <person name="Calvo S.E."/>
            <person name="Nusbaum C."/>
            <person name="Galagan J.E."/>
            <person name="Birren B.W."/>
        </authorList>
    </citation>
    <scope>NUCLEOTIDE SEQUENCE [LARGE SCALE GENOMIC DNA]</scope>
    <source>
        <strain>DSM 14603 / FGSC 9021 / UM521</strain>
    </source>
</reference>
<reference key="2">
    <citation type="submission" date="2014-09" db="EMBL/GenBank/DDBJ databases">
        <authorList>
            <person name="Gueldener U."/>
            <person name="Muensterkoetter M."/>
            <person name="Walter M.C."/>
            <person name="Mannhaupt G."/>
            <person name="Kahmann R."/>
        </authorList>
    </citation>
    <scope>GENOME REANNOTATION</scope>
    <source>
        <strain>DSM 14603 / FGSC 9021 / UM521</strain>
    </source>
</reference>
<reference key="3">
    <citation type="journal article" date="2006" name="EMBO J.">
        <title>A dynein loading zone for retrograde endosome motility at microtubule plus-ends.</title>
        <authorList>
            <person name="Lenz J.H."/>
            <person name="Schuchardt I."/>
            <person name="Straube A."/>
            <person name="Steinberg G."/>
        </authorList>
    </citation>
    <scope>FUNCTION</scope>
    <scope>SUBCELLULAR LOCATION</scope>
</reference>
<proteinExistence type="inferred from homology"/>
<keyword id="KW-0131">Cell cycle</keyword>
<keyword id="KW-0132">Cell division</keyword>
<keyword id="KW-0175">Coiled coil</keyword>
<keyword id="KW-0963">Cytoplasm</keyword>
<keyword id="KW-0206">Cytoskeleton</keyword>
<keyword id="KW-0493">Microtubule</keyword>
<keyword id="KW-0498">Mitosis</keyword>
<keyword id="KW-1185">Reference proteome</keyword>
<keyword id="KW-0677">Repeat</keyword>
<keyword id="KW-0813">Transport</keyword>
<keyword id="KW-0853">WD repeat</keyword>
<name>LIS1_MYCMD</name>
<sequence length="453" mass="50145">MSGFNGTSTSSNSILSERQKDELHKSILDYFKTNNLHESFATLMREANQEGFVPDPRAKYAGLLEKKWTSVIRLQKKIMEMESRISQLQEELSAAPSAKRSASLNDWLPAASSARHTMQGHRLPVTKVSFHPVFSQIASASEDTTVKLWDWETGDFERTLKGHTKAVQDVDFDSKGNYVLSCSSDLSIKVWDANNDYKNIKTLQGHDHSVSSVRFLPGDDYIVSASRDKTIKIWEFSTGFCTKTLQGHAEWVRSAIPSDDAKWLVSCSTDQTARVWDVSSGETKVELRGHEHVVEVAIFAPVASYAAIRQLASLDPNASKDASASMAGQFVATGSRDKTIRIWDSISGQCLKTLTGHDNWVRGLAFSPNGKSLLSVSDDKTMRLWDLQSGRCTRTIEAHQHFATGIAWGKAKIEAPIPPAQDGEEAGRKQPEARTVNVVATSSVDLTIKIWTP</sequence>
<accession>Q4P9P9</accession>
<accession>A0A0D1C4P9</accession>
<feature type="chain" id="PRO_0000240429" description="Nuclear distribution protein PAC1">
    <location>
        <begin position="1"/>
        <end position="453"/>
    </location>
</feature>
<feature type="domain" description="LisH" evidence="2">
    <location>
        <begin position="19"/>
        <end position="51"/>
    </location>
</feature>
<feature type="repeat" description="WD 1">
    <location>
        <begin position="120"/>
        <end position="161"/>
    </location>
</feature>
<feature type="repeat" description="WD 2">
    <location>
        <begin position="162"/>
        <end position="201"/>
    </location>
</feature>
<feature type="repeat" description="WD 3">
    <location>
        <begin position="205"/>
        <end position="244"/>
    </location>
</feature>
<feature type="repeat" description="WD 4">
    <location>
        <begin position="247"/>
        <end position="286"/>
    </location>
</feature>
<feature type="repeat" description="WD 5">
    <location>
        <begin position="314"/>
        <end position="355"/>
    </location>
</feature>
<feature type="repeat" description="WD 6">
    <location>
        <begin position="356"/>
        <end position="395"/>
    </location>
</feature>
<feature type="repeat" description="WD 7">
    <location>
        <begin position="413"/>
        <end position="452"/>
    </location>
</feature>
<feature type="coiled-coil region" evidence="2">
    <location>
        <begin position="69"/>
        <end position="96"/>
    </location>
</feature>
<gene>
    <name evidence="2" type="primary">PAC1</name>
</gene>